<keyword id="KW-0002">3D-structure</keyword>
<keyword id="KW-0053">Apoptosis</keyword>
<keyword id="KW-1185">Reference proteome</keyword>
<sequence length="138" mass="15486">MAIAYFIPDQAQLLARSYQQNGQQTAASPRTTATAAAPSQQQQQSQQQQQQQRHHHQQQRPQFRANISVPLGSQQGSMTMSEFGCWDLLAQIFCYALRIYSYSSSQRQPTVIQISFEISSGGQNNDEDDVTDATSKEN</sequence>
<name>GRIM_DROME</name>
<gene>
    <name type="primary">grim</name>
    <name type="ORF">CG4345</name>
</gene>
<evidence type="ECO:0000256" key="1">
    <source>
        <dbReference type="SAM" id="MobiDB-lite"/>
    </source>
</evidence>
<evidence type="ECO:0000269" key="2">
    <source>
    </source>
</evidence>
<evidence type="ECO:0000269" key="3">
    <source>
    </source>
</evidence>
<evidence type="ECO:0000269" key="4">
    <source>
    </source>
</evidence>
<evidence type="ECO:0000305" key="5"/>
<evidence type="ECO:0007829" key="6">
    <source>
        <dbReference type="PDB" id="1SE0"/>
    </source>
</evidence>
<proteinExistence type="evidence at protein level"/>
<feature type="chain" id="PRO_0000083848" description="Cell death protein Grim">
    <location>
        <begin position="1"/>
        <end position="138"/>
    </location>
</feature>
<feature type="region of interest" description="Disordered" evidence="1">
    <location>
        <begin position="21"/>
        <end position="71"/>
    </location>
</feature>
<feature type="region of interest" description="Disordered" evidence="1">
    <location>
        <begin position="119"/>
        <end position="138"/>
    </location>
</feature>
<feature type="compositionally biased region" description="Low complexity" evidence="1">
    <location>
        <begin position="23"/>
        <end position="51"/>
    </location>
</feature>
<feature type="sequence conflict" description="In Ref. 1; AAC47727." evidence="5" ref="1">
    <original>F</original>
    <variation>L</variation>
    <location>
        <position position="93"/>
    </location>
</feature>
<feature type="strand" evidence="6">
    <location>
        <begin position="3"/>
        <end position="6"/>
    </location>
</feature>
<reference key="1">
    <citation type="journal article" date="1996" name="Genes Dev.">
        <title>Grim, a novel cell death gene in Drosophila.</title>
        <authorList>
            <person name="Chen P."/>
            <person name="Nordstrom W."/>
            <person name="Gish B."/>
            <person name="Abrams J.M."/>
        </authorList>
    </citation>
    <scope>NUCLEOTIDE SEQUENCE [MRNA]</scope>
    <scope>FUNCTION</scope>
    <scope>DEVELOPMENTAL STAGE</scope>
    <source>
        <strain>Canton-S</strain>
    </source>
</reference>
<reference key="2">
    <citation type="journal article" date="2000" name="Science">
        <title>The genome sequence of Drosophila melanogaster.</title>
        <authorList>
            <person name="Adams M.D."/>
            <person name="Celniker S.E."/>
            <person name="Holt R.A."/>
            <person name="Evans C.A."/>
            <person name="Gocayne J.D."/>
            <person name="Amanatides P.G."/>
            <person name="Scherer S.E."/>
            <person name="Li P.W."/>
            <person name="Hoskins R.A."/>
            <person name="Galle R.F."/>
            <person name="George R.A."/>
            <person name="Lewis S.E."/>
            <person name="Richards S."/>
            <person name="Ashburner M."/>
            <person name="Henderson S.N."/>
            <person name="Sutton G.G."/>
            <person name="Wortman J.R."/>
            <person name="Yandell M.D."/>
            <person name="Zhang Q."/>
            <person name="Chen L.X."/>
            <person name="Brandon R.C."/>
            <person name="Rogers Y.-H.C."/>
            <person name="Blazej R.G."/>
            <person name="Champe M."/>
            <person name="Pfeiffer B.D."/>
            <person name="Wan K.H."/>
            <person name="Doyle C."/>
            <person name="Baxter E.G."/>
            <person name="Helt G."/>
            <person name="Nelson C.R."/>
            <person name="Miklos G.L.G."/>
            <person name="Abril J.F."/>
            <person name="Agbayani A."/>
            <person name="An H.-J."/>
            <person name="Andrews-Pfannkoch C."/>
            <person name="Baldwin D."/>
            <person name="Ballew R.M."/>
            <person name="Basu A."/>
            <person name="Baxendale J."/>
            <person name="Bayraktaroglu L."/>
            <person name="Beasley E.M."/>
            <person name="Beeson K.Y."/>
            <person name="Benos P.V."/>
            <person name="Berman B.P."/>
            <person name="Bhandari D."/>
            <person name="Bolshakov S."/>
            <person name="Borkova D."/>
            <person name="Botchan M.R."/>
            <person name="Bouck J."/>
            <person name="Brokstein P."/>
            <person name="Brottier P."/>
            <person name="Burtis K.C."/>
            <person name="Busam D.A."/>
            <person name="Butler H."/>
            <person name="Cadieu E."/>
            <person name="Center A."/>
            <person name="Chandra I."/>
            <person name="Cherry J.M."/>
            <person name="Cawley S."/>
            <person name="Dahlke C."/>
            <person name="Davenport L.B."/>
            <person name="Davies P."/>
            <person name="de Pablos B."/>
            <person name="Delcher A."/>
            <person name="Deng Z."/>
            <person name="Mays A.D."/>
            <person name="Dew I."/>
            <person name="Dietz S.M."/>
            <person name="Dodson K."/>
            <person name="Doup L.E."/>
            <person name="Downes M."/>
            <person name="Dugan-Rocha S."/>
            <person name="Dunkov B.C."/>
            <person name="Dunn P."/>
            <person name="Durbin K.J."/>
            <person name="Evangelista C.C."/>
            <person name="Ferraz C."/>
            <person name="Ferriera S."/>
            <person name="Fleischmann W."/>
            <person name="Fosler C."/>
            <person name="Gabrielian A.E."/>
            <person name="Garg N.S."/>
            <person name="Gelbart W.M."/>
            <person name="Glasser K."/>
            <person name="Glodek A."/>
            <person name="Gong F."/>
            <person name="Gorrell J.H."/>
            <person name="Gu Z."/>
            <person name="Guan P."/>
            <person name="Harris M."/>
            <person name="Harris N.L."/>
            <person name="Harvey D.A."/>
            <person name="Heiman T.J."/>
            <person name="Hernandez J.R."/>
            <person name="Houck J."/>
            <person name="Hostin D."/>
            <person name="Houston K.A."/>
            <person name="Howland T.J."/>
            <person name="Wei M.-H."/>
            <person name="Ibegwam C."/>
            <person name="Jalali M."/>
            <person name="Kalush F."/>
            <person name="Karpen G.H."/>
            <person name="Ke Z."/>
            <person name="Kennison J.A."/>
            <person name="Ketchum K.A."/>
            <person name="Kimmel B.E."/>
            <person name="Kodira C.D."/>
            <person name="Kraft C.L."/>
            <person name="Kravitz S."/>
            <person name="Kulp D."/>
            <person name="Lai Z."/>
            <person name="Lasko P."/>
            <person name="Lei Y."/>
            <person name="Levitsky A.A."/>
            <person name="Li J.H."/>
            <person name="Li Z."/>
            <person name="Liang Y."/>
            <person name="Lin X."/>
            <person name="Liu X."/>
            <person name="Mattei B."/>
            <person name="McIntosh T.C."/>
            <person name="McLeod M.P."/>
            <person name="McPherson D."/>
            <person name="Merkulov G."/>
            <person name="Milshina N.V."/>
            <person name="Mobarry C."/>
            <person name="Morris J."/>
            <person name="Moshrefi A."/>
            <person name="Mount S.M."/>
            <person name="Moy M."/>
            <person name="Murphy B."/>
            <person name="Murphy L."/>
            <person name="Muzny D.M."/>
            <person name="Nelson D.L."/>
            <person name="Nelson D.R."/>
            <person name="Nelson K.A."/>
            <person name="Nixon K."/>
            <person name="Nusskern D.R."/>
            <person name="Pacleb J.M."/>
            <person name="Palazzolo M."/>
            <person name="Pittman G.S."/>
            <person name="Pan S."/>
            <person name="Pollard J."/>
            <person name="Puri V."/>
            <person name="Reese M.G."/>
            <person name="Reinert K."/>
            <person name="Remington K."/>
            <person name="Saunders R.D.C."/>
            <person name="Scheeler F."/>
            <person name="Shen H."/>
            <person name="Shue B.C."/>
            <person name="Siden-Kiamos I."/>
            <person name="Simpson M."/>
            <person name="Skupski M.P."/>
            <person name="Smith T.J."/>
            <person name="Spier E."/>
            <person name="Spradling A.C."/>
            <person name="Stapleton M."/>
            <person name="Strong R."/>
            <person name="Sun E."/>
            <person name="Svirskas R."/>
            <person name="Tector C."/>
            <person name="Turner R."/>
            <person name="Venter E."/>
            <person name="Wang A.H."/>
            <person name="Wang X."/>
            <person name="Wang Z.-Y."/>
            <person name="Wassarman D.A."/>
            <person name="Weinstock G.M."/>
            <person name="Weissenbach J."/>
            <person name="Williams S.M."/>
            <person name="Woodage T."/>
            <person name="Worley K.C."/>
            <person name="Wu D."/>
            <person name="Yang S."/>
            <person name="Yao Q.A."/>
            <person name="Ye J."/>
            <person name="Yeh R.-F."/>
            <person name="Zaveri J.S."/>
            <person name="Zhan M."/>
            <person name="Zhang G."/>
            <person name="Zhao Q."/>
            <person name="Zheng L."/>
            <person name="Zheng X.H."/>
            <person name="Zhong F.N."/>
            <person name="Zhong W."/>
            <person name="Zhou X."/>
            <person name="Zhu S.C."/>
            <person name="Zhu X."/>
            <person name="Smith H.O."/>
            <person name="Gibbs R.A."/>
            <person name="Myers E.W."/>
            <person name="Rubin G.M."/>
            <person name="Venter J.C."/>
        </authorList>
    </citation>
    <scope>NUCLEOTIDE SEQUENCE [LARGE SCALE GENOMIC DNA]</scope>
    <source>
        <strain>Berkeley</strain>
    </source>
</reference>
<reference key="3">
    <citation type="journal article" date="2002" name="Genome Biol.">
        <title>Annotation of the Drosophila melanogaster euchromatic genome: a systematic review.</title>
        <authorList>
            <person name="Misra S."/>
            <person name="Crosby M.A."/>
            <person name="Mungall C.J."/>
            <person name="Matthews B.B."/>
            <person name="Campbell K.S."/>
            <person name="Hradecky P."/>
            <person name="Huang Y."/>
            <person name="Kaminker J.S."/>
            <person name="Millburn G.H."/>
            <person name="Prochnik S.E."/>
            <person name="Smith C.D."/>
            <person name="Tupy J.L."/>
            <person name="Whitfield E.J."/>
            <person name="Bayraktaroglu L."/>
            <person name="Berman B.P."/>
            <person name="Bettencourt B.R."/>
            <person name="Celniker S.E."/>
            <person name="de Grey A.D.N.J."/>
            <person name="Drysdale R.A."/>
            <person name="Harris N.L."/>
            <person name="Richter J."/>
            <person name="Russo S."/>
            <person name="Schroeder A.J."/>
            <person name="Shu S.Q."/>
            <person name="Stapleton M."/>
            <person name="Yamada C."/>
            <person name="Ashburner M."/>
            <person name="Gelbart W.M."/>
            <person name="Rubin G.M."/>
            <person name="Lewis S.E."/>
        </authorList>
    </citation>
    <scope>GENOME REANNOTATION</scope>
    <source>
        <strain>Berkeley</strain>
    </source>
</reference>
<reference key="4">
    <citation type="submission" date="2003-02" db="EMBL/GenBank/DDBJ databases">
        <authorList>
            <person name="Stapleton M."/>
            <person name="Brokstein P."/>
            <person name="Hong L."/>
            <person name="Agbayani A."/>
            <person name="Carlson J.W."/>
            <person name="Champe M."/>
            <person name="Chavez C."/>
            <person name="Dorsett V."/>
            <person name="Dresnek D."/>
            <person name="Farfan D."/>
            <person name="Frise E."/>
            <person name="George R.A."/>
            <person name="Gonzalez M."/>
            <person name="Guarin H."/>
            <person name="Kronmiller B."/>
            <person name="Li P.W."/>
            <person name="Liao G."/>
            <person name="Miranda A."/>
            <person name="Mungall C.J."/>
            <person name="Nunoo J."/>
            <person name="Pacleb J.M."/>
            <person name="Paragas V."/>
            <person name="Park S."/>
            <person name="Patel S."/>
            <person name="Phouanenavong S."/>
            <person name="Wan K.H."/>
            <person name="Yu C."/>
            <person name="Lewis S.E."/>
            <person name="Rubin G.M."/>
            <person name="Celniker S.E."/>
        </authorList>
    </citation>
    <scope>NUCLEOTIDE SEQUENCE [LARGE SCALE MRNA]</scope>
    <source>
        <strain>Berkeley</strain>
        <tissue>Embryo</tissue>
    </source>
</reference>
<reference key="5">
    <citation type="journal article" date="1998" name="Dev. Biol.">
        <title>Dredd, a novel effector of the apoptosis activators reaper, grim, and hid in Drosophila.</title>
        <authorList>
            <person name="Chen P."/>
            <person name="Rodriguez A."/>
            <person name="Erskine R."/>
            <person name="Thach T."/>
            <person name="Abrams J.M."/>
        </authorList>
    </citation>
    <scope>FUNCTION</scope>
    <source>
        <tissue>Embryo</tissue>
    </source>
</reference>
<reference key="6">
    <citation type="journal article" date="2007" name="J. Cell Biol.">
        <title>DIAP2 functions as a mechanism-based regulator of drICE that contributes to the caspase activity threshold in living cells.</title>
        <authorList>
            <person name="Ribeiro P.S."/>
            <person name="Kuranaga E."/>
            <person name="Tenev T."/>
            <person name="Leulier F."/>
            <person name="Miura M."/>
            <person name="Meier P."/>
        </authorList>
    </citation>
    <scope>INTERACTION WITH DIAP2</scope>
</reference>
<dbReference type="EMBL" id="U61976">
    <property type="protein sequence ID" value="AAC47727.1"/>
    <property type="molecule type" value="mRNA"/>
</dbReference>
<dbReference type="EMBL" id="AE014296">
    <property type="protein sequence ID" value="AAF49265.1"/>
    <property type="molecule type" value="Genomic_DNA"/>
</dbReference>
<dbReference type="EMBL" id="BT003512">
    <property type="protein sequence ID" value="AAO39516.1"/>
    <property type="molecule type" value="mRNA"/>
</dbReference>
<dbReference type="RefSeq" id="NP_524137.2">
    <property type="nucleotide sequence ID" value="NM_079413.3"/>
</dbReference>
<dbReference type="PDB" id="1JD5">
    <property type="method" value="X-ray"/>
    <property type="resolution" value="1.90 A"/>
    <property type="chains" value="B=2-11"/>
</dbReference>
<dbReference type="PDB" id="1SE0">
    <property type="method" value="X-ray"/>
    <property type="resolution" value="1.75 A"/>
    <property type="chains" value="B=2-11"/>
</dbReference>
<dbReference type="PDBsum" id="1JD5"/>
<dbReference type="PDBsum" id="1SE0"/>
<dbReference type="SMR" id="Q24570"/>
<dbReference type="BioGRID" id="65298">
    <property type="interactions" value="58"/>
</dbReference>
<dbReference type="DIP" id="DIP-20419N"/>
<dbReference type="ELM" id="Q24570"/>
<dbReference type="FunCoup" id="Q24570">
    <property type="interactions" value="8"/>
</dbReference>
<dbReference type="IntAct" id="Q24570">
    <property type="interactions" value="4"/>
</dbReference>
<dbReference type="STRING" id="7227.FBpp0074896"/>
<dbReference type="PaxDb" id="7227-FBpp0074896"/>
<dbReference type="EnsemblMetazoa" id="FBtr0075130">
    <property type="protein sequence ID" value="FBpp0074896"/>
    <property type="gene ID" value="FBgn0015946"/>
</dbReference>
<dbReference type="GeneID" id="40014"/>
<dbReference type="KEGG" id="dme:Dmel_CG4345"/>
<dbReference type="UCSC" id="CG4345-RA">
    <property type="organism name" value="d. melanogaster"/>
</dbReference>
<dbReference type="AGR" id="FB:FBgn0015946"/>
<dbReference type="CTD" id="40014"/>
<dbReference type="FlyBase" id="FBgn0015946">
    <property type="gene designation" value="grim"/>
</dbReference>
<dbReference type="VEuPathDB" id="VectorBase:FBgn0015946"/>
<dbReference type="eggNOG" id="ENOG502TD6Q">
    <property type="taxonomic scope" value="Eukaryota"/>
</dbReference>
<dbReference type="HOGENOM" id="CLU_1857348_0_0_1"/>
<dbReference type="InParanoid" id="Q24570"/>
<dbReference type="OMA" id="RQQGAMS"/>
<dbReference type="OrthoDB" id="7917527at2759"/>
<dbReference type="PhylomeDB" id="Q24570"/>
<dbReference type="BioGRID-ORCS" id="40014">
    <property type="hits" value="0 hits in 1 CRISPR screen"/>
</dbReference>
<dbReference type="EvolutionaryTrace" id="Q24570"/>
<dbReference type="GenomeRNAi" id="40014"/>
<dbReference type="PRO" id="PR:Q24570"/>
<dbReference type="Proteomes" id="UP000000803">
    <property type="component" value="Chromosome 3L"/>
</dbReference>
<dbReference type="Bgee" id="FBgn0015946">
    <property type="expression patterns" value="Expressed in anterior ectoderm anlage (Drosophila) and 32 other cell types or tissues"/>
</dbReference>
<dbReference type="ExpressionAtlas" id="Q24570">
    <property type="expression patterns" value="baseline and differential"/>
</dbReference>
<dbReference type="GO" id="GO:0005737">
    <property type="term" value="C:cytoplasm"/>
    <property type="evidence" value="ECO:0000314"/>
    <property type="project" value="FlyBase"/>
</dbReference>
<dbReference type="GO" id="GO:0005759">
    <property type="term" value="C:mitochondrial matrix"/>
    <property type="evidence" value="ECO:0000314"/>
    <property type="project" value="FlyBase"/>
</dbReference>
<dbReference type="GO" id="GO:0005739">
    <property type="term" value="C:mitochondrion"/>
    <property type="evidence" value="ECO:0000314"/>
    <property type="project" value="FlyBase"/>
</dbReference>
<dbReference type="GO" id="GO:0005634">
    <property type="term" value="C:nucleus"/>
    <property type="evidence" value="ECO:0000314"/>
    <property type="project" value="FlyBase"/>
</dbReference>
<dbReference type="GO" id="GO:0005886">
    <property type="term" value="C:plasma membrane"/>
    <property type="evidence" value="ECO:0000314"/>
    <property type="project" value="FlyBase"/>
</dbReference>
<dbReference type="GO" id="GO:0042803">
    <property type="term" value="F:protein homodimerization activity"/>
    <property type="evidence" value="ECO:0000353"/>
    <property type="project" value="FlyBase"/>
</dbReference>
<dbReference type="GO" id="GO:0006915">
    <property type="term" value="P:apoptotic process"/>
    <property type="evidence" value="ECO:0000314"/>
    <property type="project" value="FlyBase"/>
</dbReference>
<dbReference type="GO" id="GO:0097190">
    <property type="term" value="P:apoptotic signaling pathway"/>
    <property type="evidence" value="ECO:0000316"/>
    <property type="project" value="FlyBase"/>
</dbReference>
<dbReference type="GO" id="GO:0008340">
    <property type="term" value="P:determination of adult lifespan"/>
    <property type="evidence" value="ECO:0000315"/>
    <property type="project" value="FlyBase"/>
</dbReference>
<dbReference type="GO" id="GO:0035193">
    <property type="term" value="P:larval central nervous system remodeling"/>
    <property type="evidence" value="ECO:0000304"/>
    <property type="project" value="FlyBase"/>
</dbReference>
<dbReference type="GO" id="GO:0035006">
    <property type="term" value="P:melanization defense response"/>
    <property type="evidence" value="ECO:0000315"/>
    <property type="project" value="FlyBase"/>
</dbReference>
<dbReference type="GO" id="GO:0051402">
    <property type="term" value="P:neuron apoptotic process"/>
    <property type="evidence" value="ECO:0000315"/>
    <property type="project" value="FlyBase"/>
</dbReference>
<dbReference type="GO" id="GO:0043065">
    <property type="term" value="P:positive regulation of apoptotic process"/>
    <property type="evidence" value="ECO:0000314"/>
    <property type="project" value="FlyBase"/>
</dbReference>
<dbReference type="GO" id="GO:0090200">
    <property type="term" value="P:positive regulation of release of cytochrome c from mitochondria"/>
    <property type="evidence" value="ECO:0000314"/>
    <property type="project" value="FlyBase"/>
</dbReference>
<dbReference type="GO" id="GO:0012501">
    <property type="term" value="P:programmed cell death"/>
    <property type="evidence" value="ECO:0000315"/>
    <property type="project" value="FlyBase"/>
</dbReference>
<dbReference type="GO" id="GO:0010623">
    <property type="term" value="P:programmed cell death involved in cell development"/>
    <property type="evidence" value="ECO:0000315"/>
    <property type="project" value="FlyBase"/>
</dbReference>
<dbReference type="DisProt" id="DP02149"/>
<protein>
    <recommendedName>
        <fullName>Cell death protein Grim</fullName>
    </recommendedName>
</protein>
<organism>
    <name type="scientific">Drosophila melanogaster</name>
    <name type="common">Fruit fly</name>
    <dbReference type="NCBI Taxonomy" id="7227"/>
    <lineage>
        <taxon>Eukaryota</taxon>
        <taxon>Metazoa</taxon>
        <taxon>Ecdysozoa</taxon>
        <taxon>Arthropoda</taxon>
        <taxon>Hexapoda</taxon>
        <taxon>Insecta</taxon>
        <taxon>Pterygota</taxon>
        <taxon>Neoptera</taxon>
        <taxon>Endopterygota</taxon>
        <taxon>Diptera</taxon>
        <taxon>Brachycera</taxon>
        <taxon>Muscomorpha</taxon>
        <taxon>Ephydroidea</taxon>
        <taxon>Drosophilidae</taxon>
        <taxon>Drosophila</taxon>
        <taxon>Sophophora</taxon>
    </lineage>
</organism>
<comment type="function">
    <text evidence="3 4">Activator of apoptosis, independent of rpr and hid, that acts on the effector Dredd.</text>
</comment>
<comment type="subunit">
    <text evidence="2">Interacts with Diap2 (via BIR2 domain).</text>
</comment>
<comment type="interaction">
    <interactant intactId="EBI-167445">
        <id>Q24570</id>
    </interactant>
    <interactant intactId="EBI-112046">
        <id>Q24307</id>
        <label>Diap2</label>
    </interactant>
    <organismsDiffer>false</organismsDiffer>
    <experiments>2</experiments>
</comment>
<comment type="developmental stage">
    <text evidence="3">Expression coincides with the onset of programmed cell death (PCD) at all stages of embryonic development.</text>
</comment>
<accession>Q24570</accession>
<accession>Q9VVP6</accession>